<accession>P12650</accession>
<comment type="function">
    <molecule>Spike protein S1</molecule>
    <text evidence="1">Attaches the virion to the host cell membrane by interacting with sialic acids, initiating the infection.</text>
</comment>
<comment type="function">
    <molecule>Spike protein S2</molecule>
    <text evidence="1">Mediates fusion of the virion and cellular membranes by acting as a class I viral fusion protein. Under the current model, the protein has at least 3 conformational states: pre-fusion native state, pre-hairpin intermediate state, and post-fusion hairpin state. During viral and target cell membrane fusion, the coiled coil regions (heptad repeats) assume a trimer-of-hairpins structure, positioning the fusion peptide in close proximity to the C-terminal region of the ectodomain. The formation of this structure appears to drive apposition and subsequent fusion of viral and target cell membranes.</text>
</comment>
<comment type="function">
    <molecule>Spike protein S2'</molecule>
    <text evidence="1">Acts as a viral fusion peptide after S2 cleavage occurring upon virus endocytosis.</text>
</comment>
<comment type="subunit">
    <text evidence="1">Homotrimer; each monomer consists of a S1 and a S2 subunit. The resulting peplomers protrude from the virus surface as spikes.</text>
</comment>
<comment type="subcellular location">
    <molecule>Spike protein S2</molecule>
    <subcellularLocation>
        <location evidence="1">Virion membrane</location>
        <topology evidence="1">Single-pass type I membrane protein</topology>
    </subcellularLocation>
    <subcellularLocation>
        <location evidence="1">Host endoplasmic reticulum-Golgi intermediate compartment membrane</location>
        <topology evidence="1">Single-pass type I membrane protein</topology>
    </subcellularLocation>
    <text evidence="1">Accumulates in the endoplasmic reticulum-Golgi intermediate compartment, where it participates in virus particle assembly. Some S oligomers may be transported to the plasma membrane, where they may mediate cell-cell fusion.</text>
</comment>
<comment type="subcellular location">
    <molecule>Spike protein S1</molecule>
    <subcellularLocation>
        <location evidence="1">Virion membrane</location>
        <topology evidence="1">Peripheral membrane protein</topology>
    </subcellularLocation>
    <subcellularLocation>
        <location evidence="1">Host endoplasmic reticulum-Golgi intermediate compartment membrane</location>
        <topology evidence="1">Peripheral membrane protein</topology>
    </subcellularLocation>
    <text evidence="1">Accumulates in the endoplasmic reticulum-Golgi intermediate compartment, where it participates in virus particle assembly. Some S oligomers may be transported to the plasma membrane, where they may mediate cell-cell fusion. S1 is not anchored to the viral envelope, but associates with the extravirion surface through its binding to S2.</text>
</comment>
<comment type="domain">
    <text evidence="1">The di-lysine motif confers endoplasmic reticulum localization for type I membrane proteins.</text>
</comment>
<comment type="PTM">
    <text evidence="1">Specific enzymatic cleavages in vivo yield mature proteins. The precursor is processed into S1 and S2 by host cell furin or furin-like protease to yield the mature S1 and S2 proteins. The cleavage site between S1 and S2 requires the optimal sequence [KR]-X-[KR]-R. Additionally, a second cleavage leads to the release of a fusion peptide after viral attachment to host cell receptor.</text>
</comment>
<comment type="similarity">
    <text evidence="1">Belongs to the gammacoronaviruses spike protein family.</text>
</comment>
<gene>
    <name evidence="1" type="primary">S</name>
    <name type="ORF">2</name>
</gene>
<evidence type="ECO:0000255" key="1">
    <source>
        <dbReference type="HAMAP-Rule" id="MF_04098"/>
    </source>
</evidence>
<evidence type="ECO:0000255" key="2">
    <source>
        <dbReference type="PROSITE-ProRule" id="PRU01271"/>
    </source>
</evidence>
<evidence type="ECO:0000255" key="3">
    <source>
        <dbReference type="PROSITE-ProRule" id="PRU01272"/>
    </source>
</evidence>
<reference key="1">
    <citation type="journal article" date="1988" name="Virology">
        <title>Cloning and sequencing of genes encoding structural proteins of avian infectious bronchitis virus.</title>
        <authorList>
            <person name="Sutou S."/>
            <person name="Sato S."/>
            <person name="Okabe T."/>
            <person name="Nakai M."/>
            <person name="Sasaki N."/>
        </authorList>
    </citation>
    <scope>NUCLEOTIDE SEQUENCE [GENOMIC RNA]</scope>
</reference>
<protein>
    <recommendedName>
        <fullName evidence="1">Spike glycoprotein</fullName>
        <shortName evidence="1">S glycoprotein</shortName>
    </recommendedName>
    <alternativeName>
        <fullName evidence="1">E2</fullName>
    </alternativeName>
    <alternativeName>
        <fullName evidence="1">Peplomer protein</fullName>
    </alternativeName>
    <component>
        <recommendedName>
            <fullName evidence="1">Spike protein S1</fullName>
        </recommendedName>
    </component>
    <component>
        <recommendedName>
            <fullName evidence="1">Spike protein S2</fullName>
        </recommendedName>
    </component>
    <component>
        <recommendedName>
            <fullName evidence="1">Spike protein S2'</fullName>
        </recommendedName>
    </component>
</protein>
<feature type="signal peptide" evidence="1">
    <location>
        <begin position="1"/>
        <end position="18"/>
    </location>
</feature>
<feature type="chain" id="PRO_0000037174" description="Spike glycoprotein" evidence="1">
    <location>
        <begin position="19"/>
        <end position="1162"/>
    </location>
</feature>
<feature type="chain" id="PRO_0000037175" description="Spike protein S1" evidence="1">
    <location>
        <begin position="19"/>
        <end position="537"/>
    </location>
</feature>
<feature type="chain" id="PRO_0000037176" description="Spike protein S2" evidence="1">
    <location>
        <begin position="538"/>
        <end position="1162"/>
    </location>
</feature>
<feature type="chain" id="PRO_0000444094" description="Spike protein S2'" evidence="1">
    <location>
        <begin position="691"/>
        <end position="1162"/>
    </location>
</feature>
<feature type="topological domain" description="Extracellular" evidence="1">
    <location>
        <begin position="19"/>
        <end position="1095"/>
    </location>
</feature>
<feature type="transmembrane region" description="Helical" evidence="1">
    <location>
        <begin position="1096"/>
        <end position="1116"/>
    </location>
</feature>
<feature type="topological domain" description="Cytoplasmic" evidence="1">
    <location>
        <begin position="1117"/>
        <end position="1162"/>
    </location>
</feature>
<feature type="region of interest" description="Heptad repeat 1 (HR1)" evidence="2">
    <location>
        <begin position="769"/>
        <end position="874"/>
    </location>
</feature>
<feature type="region of interest" description="Heptad repeat 2 (HR2)" evidence="3">
    <location>
        <begin position="1024"/>
        <end position="1105"/>
    </location>
</feature>
<feature type="coiled-coil region" evidence="1">
    <location>
        <begin position="822"/>
        <end position="866"/>
    </location>
</feature>
<feature type="coiled-coil region" evidence="1">
    <location>
        <begin position="1055"/>
        <end position="1083"/>
    </location>
</feature>
<feature type="short sequence motif" description="Di-lysine motif" evidence="1">
    <location>
        <begin position="1159"/>
        <end position="1162"/>
    </location>
</feature>
<feature type="site" description="Cleavage; by host furin" evidence="1">
    <location>
        <begin position="537"/>
        <end position="538"/>
    </location>
</feature>
<feature type="site" description="Cleavage; by host furin" evidence="1">
    <location>
        <begin position="690"/>
        <end position="691"/>
    </location>
</feature>
<feature type="glycosylation site" description="N-linked (GlcNAc...) asparagine; by host" evidence="1">
    <location>
        <position position="51"/>
    </location>
</feature>
<feature type="glycosylation site" description="N-linked (GlcNAc...) asparagine; by host" evidence="1">
    <location>
        <position position="77"/>
    </location>
</feature>
<feature type="glycosylation site" description="N-linked (GlcNAc...) asparagine; by host" evidence="1">
    <location>
        <position position="103"/>
    </location>
</feature>
<feature type="glycosylation site" description="N-linked (GlcNAc...) asparagine; by host" evidence="1">
    <location>
        <position position="144"/>
    </location>
</feature>
<feature type="glycosylation site" description="N-linked (GlcNAc...) asparagine; by host" evidence="1">
    <location>
        <position position="163"/>
    </location>
</feature>
<feature type="glycosylation site" description="N-linked (GlcNAc...) asparagine; by host" evidence="1">
    <location>
        <position position="178"/>
    </location>
</feature>
<feature type="glycosylation site" description="N-linked (GlcNAc...) asparagine; by host" evidence="1">
    <location>
        <position position="212"/>
    </location>
</feature>
<feature type="glycosylation site" description="N-linked (GlcNAc...) asparagine; by host" evidence="1">
    <location>
        <position position="237"/>
    </location>
</feature>
<feature type="glycosylation site" description="N-linked (GlcNAc...) asparagine; by host" evidence="1">
    <location>
        <position position="247"/>
    </location>
</feature>
<feature type="glycosylation site" description="N-linked (GlcNAc...) asparagine; by host" evidence="1">
    <location>
        <position position="264"/>
    </location>
</feature>
<feature type="glycosylation site" description="N-linked (GlcNAc...) asparagine; by host" evidence="1">
    <location>
        <position position="271"/>
    </location>
</feature>
<feature type="glycosylation site" description="N-linked (GlcNAc...) asparagine; by host" evidence="1">
    <location>
        <position position="276"/>
    </location>
</feature>
<feature type="glycosylation site" description="N-linked (GlcNAc...) asparagine; by host" evidence="1">
    <location>
        <position position="306"/>
    </location>
</feature>
<feature type="glycosylation site" description="N-linked (GlcNAc...) asparagine; by host" evidence="1">
    <location>
        <position position="425"/>
    </location>
</feature>
<feature type="glycosylation site" description="N-linked (GlcNAc...) asparagine; by host" evidence="1">
    <location>
        <position position="447"/>
    </location>
</feature>
<feature type="glycosylation site" description="N-linked (GlcNAc...) asparagine; by host" evidence="1">
    <location>
        <position position="513"/>
    </location>
</feature>
<feature type="glycosylation site" description="N-linked (GlcNAc...) asparagine; by host" evidence="1">
    <location>
        <position position="530"/>
    </location>
</feature>
<feature type="glycosylation site" description="N-linked (GlcNAc...) asparagine; by host" evidence="1">
    <location>
        <position position="579"/>
    </location>
</feature>
<feature type="glycosylation site" description="N-linked (GlcNAc...) asparagine; by host" evidence="1">
    <location>
        <position position="591"/>
    </location>
</feature>
<feature type="glycosylation site" description="N-linked (GlcNAc...) asparagine; by host" evidence="1">
    <location>
        <position position="669"/>
    </location>
</feature>
<feature type="glycosylation site" description="N-linked (GlcNAc...) asparagine; by host" evidence="1">
    <location>
        <position position="676"/>
    </location>
</feature>
<feature type="glycosylation site" description="N-linked (GlcNAc...) asparagine; by host" evidence="1">
    <location>
        <position position="714"/>
    </location>
</feature>
<feature type="glycosylation site" description="N-linked (GlcNAc...) asparagine; by host" evidence="1">
    <location>
        <position position="947"/>
    </location>
</feature>
<feature type="glycosylation site" description="N-linked (GlcNAc...) asparagine; by host" evidence="1">
    <location>
        <position position="960"/>
    </location>
</feature>
<feature type="glycosylation site" description="N-linked (GlcNAc...) asparagine; by host" evidence="1">
    <location>
        <position position="979"/>
    </location>
</feature>
<feature type="glycosylation site" description="N-linked (GlcNAc...) asparagine; by host" evidence="1">
    <location>
        <position position="1014"/>
    </location>
</feature>
<feature type="glycosylation site" description="N-linked (GlcNAc...) asparagine; by host" evidence="1">
    <location>
        <position position="1051"/>
    </location>
</feature>
<feature type="glycosylation site" description="N-linked (GlcNAc...) asparagine; by host" evidence="1">
    <location>
        <position position="1058"/>
    </location>
</feature>
<feature type="glycosylation site" description="N-linked (GlcNAc...) asparagine; by host" evidence="1">
    <location>
        <position position="1074"/>
    </location>
</feature>
<name>SPIKE_IBVK</name>
<sequence length="1162" mass="128538">MLVTPLLLVTLLCALCSAALYDSSSYVYYYQSAFRPPDGWHLHGGAYAVVNISSESNNAGSSSGCTVGTIHGGRVVNASSIAMTAPSSGMAWSSSQFCTAYCNFSDTTVFVTHCYKHGGCPITGMLQQHSIRVSAMKNGQLFYNLTVSVAKYPTFKSFQCVNNLTSVYLNGDLVYTSNETTDVTSAGVYFKAVGPITYKVMREVRALAYFVNGTAQDVILCDGSPRGLLACQYNTGNFSDGFYPFTNSSLVKQKFIVYRENSVNTTFTLHNFTFHNETGANPNPSGVQNIQTYQTQTAQSGYYNFNFSFLSSFVYKESNFMYGSYHPSCSFRLETINNGLWFNSLSVSIAYGPLQGGCKQSVFSGRATCCYAYSYGGPLLCKGVYSGELDHNFECGLLVYVTKSGGSRIQTATEPPVITQHNYNNITLNTCVDYNIYGRIGQGFITNVTDSAVSYNYLADAGLAILDTSGSIDIFVVQSEYGLNYYKVNPCEDVNQQFVVSGGKLVGILTSRNETGSQLLENQFYIKITNGTRRFRRSITESVENCPYVSYGKFCIKPDGSISTIVPKYLEQFVAPLLNVTENVLIPNSFNLTVTDEYIQTRMDKVQINCLQYICGNSLECRNLFQQYGPVCDNMLSVVNSVGQKEDMELLNFYSSTKPAGFNTPVLSNVSTGEFNISLFLTTPSSPRRRSFIEDLLFTSVESVGLPTDDAYKNCTAGPLGFLKDLVCAREYNGLLVLPPIITAEMQTLYTSSLVASMAFGGITAAGAIPFATQLQARINHLGITQSLLLKNQEKIAASFNKAIGHMQEGFRSTSLALQQIQDVVNKQSAILTETMASLNKNFGAISSVIQEIYLQLDAIQANAQVDRLITGRLSSLSVLASAKQAEYIRVSQQRELATQKINECVKSQSTRYSFCGNGRHVLTIPQNAPNGIVFIHFTYTPESFVNVTAIVGFCVKPNNASQYAIVPVNGRGIFIQVNDSYYITARDMYMPRHITAGDIVTLTSCQANYVSVNKTVITTFVENDDFDFDDELSKWWIETKYELPDFDQFNYTIPVLNITYDIDKIEEVIKGLNDSLIDLETLSILKTYIKWPWYVWLAIAFATIIFILILGWVFFMTGCCGCCCGCFGIIPLMSKCGKKSSYYTTFDNDVVTEQYRPKKSV</sequence>
<organism>
    <name type="scientific">Avian infectious bronchitis virus (strain KB8523)</name>
    <name type="common">IBV</name>
    <dbReference type="NCBI Taxonomy" id="11126"/>
    <lineage>
        <taxon>Viruses</taxon>
        <taxon>Riboviria</taxon>
        <taxon>Orthornavirae</taxon>
        <taxon>Pisuviricota</taxon>
        <taxon>Pisoniviricetes</taxon>
        <taxon>Nidovirales</taxon>
        <taxon>Cornidovirineae</taxon>
        <taxon>Coronaviridae</taxon>
        <taxon>Orthocoronavirinae</taxon>
        <taxon>Gammacoronavirus</taxon>
        <taxon>Igacovirus</taxon>
        <taxon>Avian coronavirus</taxon>
    </lineage>
</organism>
<organismHost>
    <name type="scientific">Gallus gallus</name>
    <name type="common">Chicken</name>
    <dbReference type="NCBI Taxonomy" id="9031"/>
</organismHost>
<proteinExistence type="inferred from homology"/>
<keyword id="KW-0165">Cleavage on pair of basic residues</keyword>
<keyword id="KW-0175">Coiled coil</keyword>
<keyword id="KW-1170">Fusion of virus membrane with host endosomal membrane</keyword>
<keyword id="KW-1168">Fusion of virus membrane with host membrane</keyword>
<keyword id="KW-0325">Glycoprotein</keyword>
<keyword id="KW-1043">Host membrane</keyword>
<keyword id="KW-0945">Host-virus interaction</keyword>
<keyword id="KW-0472">Membrane</keyword>
<keyword id="KW-0732">Signal</keyword>
<keyword id="KW-0812">Transmembrane</keyword>
<keyword id="KW-1133">Transmembrane helix</keyword>
<keyword id="KW-1161">Viral attachment to host cell</keyword>
<keyword id="KW-0261">Viral envelope protein</keyword>
<keyword id="KW-1162">Viral penetration into host cytoplasm</keyword>
<keyword id="KW-0946">Virion</keyword>
<keyword id="KW-0843">Virulence</keyword>
<keyword id="KW-1164">Virus endocytosis by host</keyword>
<keyword id="KW-1160">Virus entry into host cell</keyword>
<dbReference type="EMBL" id="M21515">
    <property type="protein sequence ID" value="AAA66578.1"/>
    <property type="molecule type" value="Genomic_RNA"/>
</dbReference>
<dbReference type="PIR" id="B29249">
    <property type="entry name" value="VGIHAK"/>
</dbReference>
<dbReference type="SMR" id="P12650"/>
<dbReference type="GlyCosmos" id="P12650">
    <property type="glycosylation" value="29 sites, No reported glycans"/>
</dbReference>
<dbReference type="GO" id="GO:0044173">
    <property type="term" value="C:host cell endoplasmic reticulum-Golgi intermediate compartment membrane"/>
    <property type="evidence" value="ECO:0007669"/>
    <property type="project" value="UniProtKB-SubCell"/>
</dbReference>
<dbReference type="GO" id="GO:0016020">
    <property type="term" value="C:membrane"/>
    <property type="evidence" value="ECO:0007669"/>
    <property type="project" value="UniProtKB-KW"/>
</dbReference>
<dbReference type="GO" id="GO:0019031">
    <property type="term" value="C:viral envelope"/>
    <property type="evidence" value="ECO:0007669"/>
    <property type="project" value="UniProtKB-KW"/>
</dbReference>
<dbReference type="GO" id="GO:0055036">
    <property type="term" value="C:virion membrane"/>
    <property type="evidence" value="ECO:0007669"/>
    <property type="project" value="UniProtKB-SubCell"/>
</dbReference>
<dbReference type="GO" id="GO:0075509">
    <property type="term" value="P:endocytosis involved in viral entry into host cell"/>
    <property type="evidence" value="ECO:0007669"/>
    <property type="project" value="UniProtKB-KW"/>
</dbReference>
<dbReference type="GO" id="GO:0039654">
    <property type="term" value="P:fusion of virus membrane with host endosome membrane"/>
    <property type="evidence" value="ECO:0007669"/>
    <property type="project" value="UniProtKB-KW"/>
</dbReference>
<dbReference type="GO" id="GO:0019064">
    <property type="term" value="P:fusion of virus membrane with host plasma membrane"/>
    <property type="evidence" value="ECO:0007669"/>
    <property type="project" value="InterPro"/>
</dbReference>
<dbReference type="GO" id="GO:0046813">
    <property type="term" value="P:receptor-mediated virion attachment to host cell"/>
    <property type="evidence" value="ECO:0007669"/>
    <property type="project" value="InterPro"/>
</dbReference>
<dbReference type="CDD" id="cd22372">
    <property type="entry name" value="gammaCoV_Spike_SD1-2_S1-S2_S2"/>
    <property type="match status" value="1"/>
</dbReference>
<dbReference type="FunFam" id="1.20.5.300:FF:000003">
    <property type="entry name" value="Spike glycoprotein"/>
    <property type="match status" value="1"/>
</dbReference>
<dbReference type="Gene3D" id="1.20.5.300">
    <property type="match status" value="2"/>
</dbReference>
<dbReference type="HAMAP" id="MF_04098">
    <property type="entry name" value="GAMMA_CORONA_SPIKE"/>
    <property type="match status" value="1"/>
</dbReference>
<dbReference type="InterPro" id="IPR043607">
    <property type="entry name" value="CoV_S1_C"/>
</dbReference>
<dbReference type="InterPro" id="IPR043473">
    <property type="entry name" value="S2_sf_CoV"/>
</dbReference>
<dbReference type="InterPro" id="IPR002552">
    <property type="entry name" value="Spike_S2_CoV"/>
</dbReference>
<dbReference type="InterPro" id="IPR043614">
    <property type="entry name" value="Spike_S2_CoV_C"/>
</dbReference>
<dbReference type="InterPro" id="IPR044873">
    <property type="entry name" value="Spike_S2_CoV_HR1"/>
</dbReference>
<dbReference type="InterPro" id="IPR044874">
    <property type="entry name" value="Spike_S2_CoV_HR2"/>
</dbReference>
<dbReference type="Pfam" id="PF19209">
    <property type="entry name" value="CoV_S1_C"/>
    <property type="match status" value="1"/>
</dbReference>
<dbReference type="Pfam" id="PF01601">
    <property type="entry name" value="CoV_S2"/>
    <property type="match status" value="1"/>
</dbReference>
<dbReference type="Pfam" id="PF19214">
    <property type="entry name" value="CoV_S2_C"/>
    <property type="match status" value="1"/>
</dbReference>
<dbReference type="SUPFAM" id="SSF111474">
    <property type="entry name" value="Coronavirus S2 glycoprotein"/>
    <property type="match status" value="2"/>
</dbReference>
<dbReference type="PROSITE" id="PS51923">
    <property type="entry name" value="COV_S2_HR1"/>
    <property type="match status" value="1"/>
</dbReference>
<dbReference type="PROSITE" id="PS51924">
    <property type="entry name" value="COV_S2_HR2"/>
    <property type="match status" value="1"/>
</dbReference>